<organism>
    <name type="scientific">Rhodococcus jostii (strain RHA1)</name>
    <dbReference type="NCBI Taxonomy" id="101510"/>
    <lineage>
        <taxon>Bacteria</taxon>
        <taxon>Bacillati</taxon>
        <taxon>Actinomycetota</taxon>
        <taxon>Actinomycetes</taxon>
        <taxon>Mycobacteriales</taxon>
        <taxon>Nocardiaceae</taxon>
        <taxon>Rhodococcus</taxon>
    </lineage>
</organism>
<comment type="function">
    <text evidence="1">Catalyzes the formation of the alpha-1,6-glucosidic linkages in glycogen by scission of a 1,4-alpha-linked oligosaccharide from growing alpha-1,4-glucan chains and the subsequent attachment of the oligosaccharide to the alpha-1,6 position.</text>
</comment>
<comment type="catalytic activity">
    <reaction evidence="1">
        <text>Transfers a segment of a (1-&gt;4)-alpha-D-glucan chain to a primary hydroxy group in a similar glucan chain.</text>
        <dbReference type="EC" id="2.4.1.18"/>
    </reaction>
</comment>
<comment type="pathway">
    <text evidence="1">Glycan biosynthesis; glycogen biosynthesis.</text>
</comment>
<comment type="subunit">
    <text evidence="1">Monomer.</text>
</comment>
<comment type="similarity">
    <text evidence="1">Belongs to the glycosyl hydrolase 13 family. GlgB subfamily.</text>
</comment>
<gene>
    <name evidence="1" type="primary">glgB</name>
    <name type="ordered locus">RHA1_ro01449</name>
</gene>
<reference key="1">
    <citation type="journal article" date="2006" name="Proc. Natl. Acad. Sci. U.S.A.">
        <title>The complete genome of Rhodococcus sp. RHA1 provides insights into a catabolic powerhouse.</title>
        <authorList>
            <person name="McLeod M.P."/>
            <person name="Warren R.L."/>
            <person name="Hsiao W.W.L."/>
            <person name="Araki N."/>
            <person name="Myhre M."/>
            <person name="Fernandes C."/>
            <person name="Miyazawa D."/>
            <person name="Wong W."/>
            <person name="Lillquist A.L."/>
            <person name="Wang D."/>
            <person name="Dosanjh M."/>
            <person name="Hara H."/>
            <person name="Petrescu A."/>
            <person name="Morin R.D."/>
            <person name="Yang G."/>
            <person name="Stott J.M."/>
            <person name="Schein J.E."/>
            <person name="Shin H."/>
            <person name="Smailus D."/>
            <person name="Siddiqui A.S."/>
            <person name="Marra M.A."/>
            <person name="Jones S.J.M."/>
            <person name="Holt R."/>
            <person name="Brinkman F.S.L."/>
            <person name="Miyauchi K."/>
            <person name="Fukuda M."/>
            <person name="Davies J.E."/>
            <person name="Mohn W.W."/>
            <person name="Eltis L.D."/>
        </authorList>
    </citation>
    <scope>NUCLEOTIDE SEQUENCE [LARGE SCALE GENOMIC DNA]</scope>
    <source>
        <strain>RHA1</strain>
    </source>
</reference>
<proteinExistence type="inferred from homology"/>
<keyword id="KW-0119">Carbohydrate metabolism</keyword>
<keyword id="KW-0320">Glycogen biosynthesis</keyword>
<keyword id="KW-0321">Glycogen metabolism</keyword>
<keyword id="KW-0328">Glycosyltransferase</keyword>
<keyword id="KW-0808">Transferase</keyword>
<name>GLGB_RHOJR</name>
<accession>Q0SGR9</accession>
<sequence>MTVEPPVAIAPDAADLDLLSRGEHHNPHSILGAHPHPDGTVIRALRPHAEAVDAVIGGTSFSLEHLAHGVWGALVPYRDLMDYRLSTTWPGGHNDVSADGYRFLPTLGELDLHLFGEGRHERLWEILGAHRRRYDTPDGTVTGTSFAVWAPNARGVSVIGDFDGWSGRNYPMRVLGSTGVWELFVPGIEAGDLYKFRVHGPDGSVRDKADPMAFATEVPPATASRVSVSTYEWNDAEWLAQRAATEPAQSPMSVYEVHLASWRPGLNYREMAEQLAVHLTETGFTHVELLPVAEHPFGGSWGYQVTSYYAPTSRFGSPDDFRWFVDHLHAAGIGVIVDWVPAHFPKDEWALARFDGTPLYEHSDPQRGEQLDWGTYVFDFGRREVRNFLVANALYWLDEFHVDGLRVDAVASMLYLDYSRPEGGWTPNIHGGRENLEAVAFLQETNATVHKQHRGVVTIAEESTAWPGVTRATNVGGLGFNMKWNMGWMHDTLGFMAHDPVHRSYHHHEITFSLMYAWSENYLLPISHDEVVHGKGTLWTRMPGDDYAKAAGVRALLAYMWSHPGKQLLFMGQEFGQTAEWSEERGLDWYQLDDPYTGGFHRGLLRLVHDLNATYREHPALWTLDTSPGGFSWIDANDTANNVLSFLRYGTDGSILACLFNFSGSPHANYRVGLPERGEWREILNTDAEIYAGSGWGNLGAVTATSQPWHGRPASAEVALPANGAIWMSLER</sequence>
<protein>
    <recommendedName>
        <fullName evidence="1">1,4-alpha-glucan branching enzyme GlgB</fullName>
        <ecNumber evidence="1">2.4.1.18</ecNumber>
    </recommendedName>
    <alternativeName>
        <fullName evidence="1">1,4-alpha-D-glucan:1,4-alpha-D-glucan 6-glucosyl-transferase</fullName>
    </alternativeName>
    <alternativeName>
        <fullName evidence="1">Alpha-(1-&gt;4)-glucan branching enzyme</fullName>
    </alternativeName>
    <alternativeName>
        <fullName evidence="1">Glycogen branching enzyme</fullName>
        <shortName evidence="1">BE</shortName>
    </alternativeName>
</protein>
<evidence type="ECO:0000255" key="1">
    <source>
        <dbReference type="HAMAP-Rule" id="MF_00685"/>
    </source>
</evidence>
<feature type="chain" id="PRO_0000260687" description="1,4-alpha-glucan branching enzyme GlgB">
    <location>
        <begin position="1"/>
        <end position="732"/>
    </location>
</feature>
<feature type="active site" description="Nucleophile" evidence="1">
    <location>
        <position position="408"/>
    </location>
</feature>
<feature type="active site" description="Proton donor" evidence="1">
    <location>
        <position position="461"/>
    </location>
</feature>
<dbReference type="EC" id="2.4.1.18" evidence="1"/>
<dbReference type="EMBL" id="CP000431">
    <property type="protein sequence ID" value="ABG93267.1"/>
    <property type="molecule type" value="Genomic_DNA"/>
</dbReference>
<dbReference type="RefSeq" id="WP_011594460.1">
    <property type="nucleotide sequence ID" value="NC_008268.1"/>
</dbReference>
<dbReference type="SMR" id="Q0SGR9"/>
<dbReference type="CAZy" id="CBM48">
    <property type="family name" value="Carbohydrate-Binding Module Family 48"/>
</dbReference>
<dbReference type="CAZy" id="GH13">
    <property type="family name" value="Glycoside Hydrolase Family 13"/>
</dbReference>
<dbReference type="KEGG" id="rha:RHA1_ro01449"/>
<dbReference type="PATRIC" id="fig|101510.16.peg.1471"/>
<dbReference type="eggNOG" id="COG0296">
    <property type="taxonomic scope" value="Bacteria"/>
</dbReference>
<dbReference type="HOGENOM" id="CLU_004245_3_2_11"/>
<dbReference type="OrthoDB" id="9800174at2"/>
<dbReference type="UniPathway" id="UPA00164"/>
<dbReference type="Proteomes" id="UP000008710">
    <property type="component" value="Chromosome"/>
</dbReference>
<dbReference type="GO" id="GO:0005829">
    <property type="term" value="C:cytosol"/>
    <property type="evidence" value="ECO:0007669"/>
    <property type="project" value="TreeGrafter"/>
</dbReference>
<dbReference type="GO" id="GO:0003844">
    <property type="term" value="F:1,4-alpha-glucan branching enzyme activity"/>
    <property type="evidence" value="ECO:0007669"/>
    <property type="project" value="UniProtKB-UniRule"/>
</dbReference>
<dbReference type="GO" id="GO:0043169">
    <property type="term" value="F:cation binding"/>
    <property type="evidence" value="ECO:0007669"/>
    <property type="project" value="InterPro"/>
</dbReference>
<dbReference type="GO" id="GO:0004553">
    <property type="term" value="F:hydrolase activity, hydrolyzing O-glycosyl compounds"/>
    <property type="evidence" value="ECO:0007669"/>
    <property type="project" value="InterPro"/>
</dbReference>
<dbReference type="GO" id="GO:0005978">
    <property type="term" value="P:glycogen biosynthetic process"/>
    <property type="evidence" value="ECO:0007669"/>
    <property type="project" value="UniProtKB-UniRule"/>
</dbReference>
<dbReference type="CDD" id="cd11322">
    <property type="entry name" value="AmyAc_Glg_BE"/>
    <property type="match status" value="1"/>
</dbReference>
<dbReference type="CDD" id="cd02855">
    <property type="entry name" value="E_set_GBE_prok_N"/>
    <property type="match status" value="1"/>
</dbReference>
<dbReference type="FunFam" id="2.60.40.10:FF:000169">
    <property type="entry name" value="1,4-alpha-glucan branching enzyme GlgB"/>
    <property type="match status" value="1"/>
</dbReference>
<dbReference type="FunFam" id="2.60.40.1180:FF:000002">
    <property type="entry name" value="1,4-alpha-glucan branching enzyme GlgB"/>
    <property type="match status" value="1"/>
</dbReference>
<dbReference type="FunFam" id="3.20.20.80:FF:000003">
    <property type="entry name" value="1,4-alpha-glucan branching enzyme GlgB"/>
    <property type="match status" value="1"/>
</dbReference>
<dbReference type="Gene3D" id="3.20.20.80">
    <property type="entry name" value="Glycosidases"/>
    <property type="match status" value="1"/>
</dbReference>
<dbReference type="Gene3D" id="2.60.40.1180">
    <property type="entry name" value="Golgi alpha-mannosidase II"/>
    <property type="match status" value="1"/>
</dbReference>
<dbReference type="Gene3D" id="2.60.40.10">
    <property type="entry name" value="Immunoglobulins"/>
    <property type="match status" value="2"/>
</dbReference>
<dbReference type="HAMAP" id="MF_00685">
    <property type="entry name" value="GlgB"/>
    <property type="match status" value="1"/>
</dbReference>
<dbReference type="InterPro" id="IPR006048">
    <property type="entry name" value="A-amylase/branching_C"/>
</dbReference>
<dbReference type="InterPro" id="IPR037439">
    <property type="entry name" value="Branching_enzy"/>
</dbReference>
<dbReference type="InterPro" id="IPR006407">
    <property type="entry name" value="GlgB"/>
</dbReference>
<dbReference type="InterPro" id="IPR054169">
    <property type="entry name" value="GlgB_N"/>
</dbReference>
<dbReference type="InterPro" id="IPR044143">
    <property type="entry name" value="GlgB_N_E_set_prok"/>
</dbReference>
<dbReference type="InterPro" id="IPR006047">
    <property type="entry name" value="Glyco_hydro_13_cat_dom"/>
</dbReference>
<dbReference type="InterPro" id="IPR004193">
    <property type="entry name" value="Glyco_hydro_13_N"/>
</dbReference>
<dbReference type="InterPro" id="IPR013780">
    <property type="entry name" value="Glyco_hydro_b"/>
</dbReference>
<dbReference type="InterPro" id="IPR017853">
    <property type="entry name" value="Glycoside_hydrolase_SF"/>
</dbReference>
<dbReference type="InterPro" id="IPR013783">
    <property type="entry name" value="Ig-like_fold"/>
</dbReference>
<dbReference type="InterPro" id="IPR014756">
    <property type="entry name" value="Ig_E-set"/>
</dbReference>
<dbReference type="NCBIfam" id="TIGR01515">
    <property type="entry name" value="branching_enzym"/>
    <property type="match status" value="1"/>
</dbReference>
<dbReference type="NCBIfam" id="NF003811">
    <property type="entry name" value="PRK05402.1"/>
    <property type="match status" value="1"/>
</dbReference>
<dbReference type="NCBIfam" id="NF008967">
    <property type="entry name" value="PRK12313.1"/>
    <property type="match status" value="1"/>
</dbReference>
<dbReference type="PANTHER" id="PTHR43651">
    <property type="entry name" value="1,4-ALPHA-GLUCAN-BRANCHING ENZYME"/>
    <property type="match status" value="1"/>
</dbReference>
<dbReference type="PANTHER" id="PTHR43651:SF3">
    <property type="entry name" value="1,4-ALPHA-GLUCAN-BRANCHING ENZYME"/>
    <property type="match status" value="1"/>
</dbReference>
<dbReference type="Pfam" id="PF00128">
    <property type="entry name" value="Alpha-amylase"/>
    <property type="match status" value="2"/>
</dbReference>
<dbReference type="Pfam" id="PF02806">
    <property type="entry name" value="Alpha-amylase_C"/>
    <property type="match status" value="1"/>
</dbReference>
<dbReference type="Pfam" id="PF02922">
    <property type="entry name" value="CBM_48"/>
    <property type="match status" value="1"/>
</dbReference>
<dbReference type="Pfam" id="PF22019">
    <property type="entry name" value="GlgB_N"/>
    <property type="match status" value="1"/>
</dbReference>
<dbReference type="PIRSF" id="PIRSF000463">
    <property type="entry name" value="GlgB"/>
    <property type="match status" value="1"/>
</dbReference>
<dbReference type="SMART" id="SM00642">
    <property type="entry name" value="Aamy"/>
    <property type="match status" value="1"/>
</dbReference>
<dbReference type="SUPFAM" id="SSF51445">
    <property type="entry name" value="(Trans)glycosidases"/>
    <property type="match status" value="1"/>
</dbReference>
<dbReference type="SUPFAM" id="SSF81296">
    <property type="entry name" value="E set domains"/>
    <property type="match status" value="2"/>
</dbReference>
<dbReference type="SUPFAM" id="SSF51011">
    <property type="entry name" value="Glycosyl hydrolase domain"/>
    <property type="match status" value="1"/>
</dbReference>